<name>BIOB_BRUA1</name>
<reference key="1">
    <citation type="journal article" date="2008" name="PLoS ONE">
        <title>Genome sequence of Brucella abortus vaccine strain S19 compared to virulent strains yields candidate virulence genes.</title>
        <authorList>
            <person name="Crasta O.R."/>
            <person name="Folkerts O."/>
            <person name="Fei Z."/>
            <person name="Mane S.P."/>
            <person name="Evans C."/>
            <person name="Martino-Catt S."/>
            <person name="Bricker B."/>
            <person name="Yu G."/>
            <person name="Du L."/>
            <person name="Sobral B.W."/>
        </authorList>
    </citation>
    <scope>NUCLEOTIDE SEQUENCE [LARGE SCALE GENOMIC DNA]</scope>
    <source>
        <strain>S19</strain>
    </source>
</reference>
<feature type="chain" id="PRO_0000381247" description="Biotin synthase">
    <location>
        <begin position="1"/>
        <end position="328"/>
    </location>
</feature>
<feature type="domain" description="Radical SAM core" evidence="2">
    <location>
        <begin position="48"/>
        <end position="275"/>
    </location>
</feature>
<feature type="binding site" evidence="1">
    <location>
        <position position="63"/>
    </location>
    <ligand>
        <name>[4Fe-4S] cluster</name>
        <dbReference type="ChEBI" id="CHEBI:49883"/>
        <note>4Fe-4S-S-AdoMet</note>
    </ligand>
</feature>
<feature type="binding site" evidence="1">
    <location>
        <position position="67"/>
    </location>
    <ligand>
        <name>[4Fe-4S] cluster</name>
        <dbReference type="ChEBI" id="CHEBI:49883"/>
        <note>4Fe-4S-S-AdoMet</note>
    </ligand>
</feature>
<feature type="binding site" evidence="1">
    <location>
        <position position="70"/>
    </location>
    <ligand>
        <name>[4Fe-4S] cluster</name>
        <dbReference type="ChEBI" id="CHEBI:49883"/>
        <note>4Fe-4S-S-AdoMet</note>
    </ligand>
</feature>
<feature type="binding site" evidence="1">
    <location>
        <position position="107"/>
    </location>
    <ligand>
        <name>[2Fe-2S] cluster</name>
        <dbReference type="ChEBI" id="CHEBI:190135"/>
    </ligand>
</feature>
<feature type="binding site" evidence="1">
    <location>
        <position position="138"/>
    </location>
    <ligand>
        <name>[2Fe-2S] cluster</name>
        <dbReference type="ChEBI" id="CHEBI:190135"/>
    </ligand>
</feature>
<feature type="binding site" evidence="1">
    <location>
        <position position="198"/>
    </location>
    <ligand>
        <name>[2Fe-2S] cluster</name>
        <dbReference type="ChEBI" id="CHEBI:190135"/>
    </ligand>
</feature>
<feature type="binding site" evidence="1">
    <location>
        <position position="270"/>
    </location>
    <ligand>
        <name>[2Fe-2S] cluster</name>
        <dbReference type="ChEBI" id="CHEBI:190135"/>
    </ligand>
</feature>
<dbReference type="EC" id="2.8.1.6" evidence="1"/>
<dbReference type="EMBL" id="CP000888">
    <property type="protein sequence ID" value="ACD74187.1"/>
    <property type="status" value="ALT_INIT"/>
    <property type="molecule type" value="Genomic_DNA"/>
</dbReference>
<dbReference type="SMR" id="B2SBF0"/>
<dbReference type="KEGG" id="bmc:BAbS19_II06920"/>
<dbReference type="HOGENOM" id="CLU_033172_1_2_5"/>
<dbReference type="UniPathway" id="UPA00078">
    <property type="reaction ID" value="UER00162"/>
</dbReference>
<dbReference type="Proteomes" id="UP000002565">
    <property type="component" value="Chromosome 2"/>
</dbReference>
<dbReference type="GO" id="GO:0051537">
    <property type="term" value="F:2 iron, 2 sulfur cluster binding"/>
    <property type="evidence" value="ECO:0007669"/>
    <property type="project" value="UniProtKB-KW"/>
</dbReference>
<dbReference type="GO" id="GO:0051539">
    <property type="term" value="F:4 iron, 4 sulfur cluster binding"/>
    <property type="evidence" value="ECO:0007669"/>
    <property type="project" value="UniProtKB-KW"/>
</dbReference>
<dbReference type="GO" id="GO:0004076">
    <property type="term" value="F:biotin synthase activity"/>
    <property type="evidence" value="ECO:0007669"/>
    <property type="project" value="UniProtKB-UniRule"/>
</dbReference>
<dbReference type="GO" id="GO:0005506">
    <property type="term" value="F:iron ion binding"/>
    <property type="evidence" value="ECO:0007669"/>
    <property type="project" value="UniProtKB-UniRule"/>
</dbReference>
<dbReference type="GO" id="GO:0009102">
    <property type="term" value="P:biotin biosynthetic process"/>
    <property type="evidence" value="ECO:0007669"/>
    <property type="project" value="UniProtKB-UniRule"/>
</dbReference>
<dbReference type="CDD" id="cd01335">
    <property type="entry name" value="Radical_SAM"/>
    <property type="match status" value="1"/>
</dbReference>
<dbReference type="Gene3D" id="3.20.20.70">
    <property type="entry name" value="Aldolase class I"/>
    <property type="match status" value="1"/>
</dbReference>
<dbReference type="HAMAP" id="MF_01694">
    <property type="entry name" value="BioB"/>
    <property type="match status" value="1"/>
</dbReference>
<dbReference type="InterPro" id="IPR013785">
    <property type="entry name" value="Aldolase_TIM"/>
</dbReference>
<dbReference type="InterPro" id="IPR010722">
    <property type="entry name" value="BATS_dom"/>
</dbReference>
<dbReference type="InterPro" id="IPR002684">
    <property type="entry name" value="Biotin_synth/BioAB"/>
</dbReference>
<dbReference type="InterPro" id="IPR024177">
    <property type="entry name" value="Biotin_synthase"/>
</dbReference>
<dbReference type="InterPro" id="IPR006638">
    <property type="entry name" value="Elp3/MiaA/NifB-like_rSAM"/>
</dbReference>
<dbReference type="InterPro" id="IPR007197">
    <property type="entry name" value="rSAM"/>
</dbReference>
<dbReference type="NCBIfam" id="TIGR00433">
    <property type="entry name" value="bioB"/>
    <property type="match status" value="1"/>
</dbReference>
<dbReference type="PANTHER" id="PTHR22976">
    <property type="entry name" value="BIOTIN SYNTHASE"/>
    <property type="match status" value="1"/>
</dbReference>
<dbReference type="PANTHER" id="PTHR22976:SF2">
    <property type="entry name" value="BIOTIN SYNTHASE, MITOCHONDRIAL"/>
    <property type="match status" value="1"/>
</dbReference>
<dbReference type="Pfam" id="PF06968">
    <property type="entry name" value="BATS"/>
    <property type="match status" value="1"/>
</dbReference>
<dbReference type="Pfam" id="PF04055">
    <property type="entry name" value="Radical_SAM"/>
    <property type="match status" value="1"/>
</dbReference>
<dbReference type="PIRSF" id="PIRSF001619">
    <property type="entry name" value="Biotin_synth"/>
    <property type="match status" value="1"/>
</dbReference>
<dbReference type="SFLD" id="SFLDF00272">
    <property type="entry name" value="biotin_synthase"/>
    <property type="match status" value="1"/>
</dbReference>
<dbReference type="SFLD" id="SFLDS00029">
    <property type="entry name" value="Radical_SAM"/>
    <property type="match status" value="1"/>
</dbReference>
<dbReference type="SMART" id="SM00876">
    <property type="entry name" value="BATS"/>
    <property type="match status" value="1"/>
</dbReference>
<dbReference type="SMART" id="SM00729">
    <property type="entry name" value="Elp3"/>
    <property type="match status" value="1"/>
</dbReference>
<dbReference type="SUPFAM" id="SSF102114">
    <property type="entry name" value="Radical SAM enzymes"/>
    <property type="match status" value="1"/>
</dbReference>
<dbReference type="PROSITE" id="PS51918">
    <property type="entry name" value="RADICAL_SAM"/>
    <property type="match status" value="1"/>
</dbReference>
<organism>
    <name type="scientific">Brucella abortus (strain S19)</name>
    <dbReference type="NCBI Taxonomy" id="430066"/>
    <lineage>
        <taxon>Bacteria</taxon>
        <taxon>Pseudomonadati</taxon>
        <taxon>Pseudomonadota</taxon>
        <taxon>Alphaproteobacteria</taxon>
        <taxon>Hyphomicrobiales</taxon>
        <taxon>Brucellaceae</taxon>
        <taxon>Brucella/Ochrobactrum group</taxon>
        <taxon>Brucella</taxon>
    </lineage>
</organism>
<comment type="function">
    <text evidence="1">Catalyzes the conversion of dethiobiotin (DTB) to biotin by the insertion of a sulfur atom into dethiobiotin via a radical-based mechanism.</text>
</comment>
<comment type="catalytic activity">
    <reaction evidence="1">
        <text>(4R,5S)-dethiobiotin + (sulfur carrier)-SH + 2 reduced [2Fe-2S]-[ferredoxin] + 2 S-adenosyl-L-methionine = (sulfur carrier)-H + biotin + 2 5'-deoxyadenosine + 2 L-methionine + 2 oxidized [2Fe-2S]-[ferredoxin]</text>
        <dbReference type="Rhea" id="RHEA:22060"/>
        <dbReference type="Rhea" id="RHEA-COMP:10000"/>
        <dbReference type="Rhea" id="RHEA-COMP:10001"/>
        <dbReference type="Rhea" id="RHEA-COMP:14737"/>
        <dbReference type="Rhea" id="RHEA-COMP:14739"/>
        <dbReference type="ChEBI" id="CHEBI:17319"/>
        <dbReference type="ChEBI" id="CHEBI:29917"/>
        <dbReference type="ChEBI" id="CHEBI:33737"/>
        <dbReference type="ChEBI" id="CHEBI:33738"/>
        <dbReference type="ChEBI" id="CHEBI:57586"/>
        <dbReference type="ChEBI" id="CHEBI:57844"/>
        <dbReference type="ChEBI" id="CHEBI:59789"/>
        <dbReference type="ChEBI" id="CHEBI:64428"/>
        <dbReference type="ChEBI" id="CHEBI:149473"/>
        <dbReference type="EC" id="2.8.1.6"/>
    </reaction>
</comment>
<comment type="cofactor">
    <cofactor evidence="1">
        <name>[4Fe-4S] cluster</name>
        <dbReference type="ChEBI" id="CHEBI:49883"/>
    </cofactor>
    <text evidence="1">Binds 1 [4Fe-4S] cluster. The cluster is coordinated with 3 cysteines and an exchangeable S-adenosyl-L-methionine.</text>
</comment>
<comment type="cofactor">
    <cofactor evidence="1">
        <name>[2Fe-2S] cluster</name>
        <dbReference type="ChEBI" id="CHEBI:190135"/>
    </cofactor>
    <text evidence="1">Binds 1 [2Fe-2S] cluster. The cluster is coordinated with 3 cysteines and 1 arginine.</text>
</comment>
<comment type="pathway">
    <text evidence="1">Cofactor biosynthesis; biotin biosynthesis; biotin from 7,8-diaminononanoate: step 2/2.</text>
</comment>
<comment type="subunit">
    <text evidence="1">Homodimer.</text>
</comment>
<comment type="similarity">
    <text evidence="1">Belongs to the radical SAM superfamily. Biotin synthase family.</text>
</comment>
<comment type="sequence caution" evidence="3">
    <conflict type="erroneous initiation">
        <sequence resource="EMBL-CDS" id="ACD74187"/>
    </conflict>
</comment>
<accession>B2SBF0</accession>
<sequence>MPDRGGENGASCSVGRWSAEEARAIYNLPFNDLLFRAHGLHRENFDPNRIQLSKLLNIKTGGCPEDCGYCSQSASAENGLKASKLMEIETVLEEARKAKAAGATRYCMGAAWRSPKDRDMPALTHMIESVKAMGLETCMTLGMLDSDKAEKLADAGLDYYNHNIDTSERFYPAVITTRSFEDRLDTLANVRNAGIKVCSGGILGLGEEAEDRIDMLVTLANLPEPPESVPINMLIPMPGTRLAKAAPVDPLEFVRVVALARILMPKSHVRLTAGRTAMSDEMQALCFFAGANSLFMGDTLLTAANPGDDRDSSLLRRLGIQAETEQPA</sequence>
<keyword id="KW-0001">2Fe-2S</keyword>
<keyword id="KW-0004">4Fe-4S</keyword>
<keyword id="KW-0093">Biotin biosynthesis</keyword>
<keyword id="KW-0408">Iron</keyword>
<keyword id="KW-0411">Iron-sulfur</keyword>
<keyword id="KW-0479">Metal-binding</keyword>
<keyword id="KW-0949">S-adenosyl-L-methionine</keyword>
<keyword id="KW-0808">Transferase</keyword>
<gene>
    <name evidence="1" type="primary">bioB</name>
    <name type="ordered locus">BAbS19_II06920</name>
</gene>
<evidence type="ECO:0000255" key="1">
    <source>
        <dbReference type="HAMAP-Rule" id="MF_01694"/>
    </source>
</evidence>
<evidence type="ECO:0000255" key="2">
    <source>
        <dbReference type="PROSITE-ProRule" id="PRU01266"/>
    </source>
</evidence>
<evidence type="ECO:0000305" key="3"/>
<proteinExistence type="inferred from homology"/>
<protein>
    <recommendedName>
        <fullName evidence="1">Biotin synthase</fullName>
        <ecNumber evidence="1">2.8.1.6</ecNumber>
    </recommendedName>
</protein>